<accession>Q0ID12</accession>
<reference key="1">
    <citation type="journal article" date="2006" name="Proc. Natl. Acad. Sci. U.S.A.">
        <title>Genome sequence of Synechococcus CC9311: insights into adaptation to a coastal environment.</title>
        <authorList>
            <person name="Palenik B."/>
            <person name="Ren Q."/>
            <person name="Dupont C.L."/>
            <person name="Myers G.S."/>
            <person name="Heidelberg J.F."/>
            <person name="Badger J.H."/>
            <person name="Madupu R."/>
            <person name="Nelson W.C."/>
            <person name="Brinkac L.M."/>
            <person name="Dodson R.J."/>
            <person name="Durkin A.S."/>
            <person name="Daugherty S.C."/>
            <person name="Sullivan S.A."/>
            <person name="Khouri H."/>
            <person name="Mohamoud Y."/>
            <person name="Halpin R."/>
            <person name="Paulsen I.T."/>
        </authorList>
    </citation>
    <scope>NUCLEOTIDE SEQUENCE [LARGE SCALE GENOMIC DNA]</scope>
    <source>
        <strain>CC9311</strain>
    </source>
</reference>
<gene>
    <name evidence="1" type="primary">rplP</name>
    <name evidence="1" type="synonym">rpl16</name>
    <name type="ordered locus">sync_0430</name>
</gene>
<sequence>MLSPKRVKFRKQQRGRMRGVATRGNTIAFGQFALQAQECGWITSRQIEASRRAMTRYVKRGGKIWIRIFPDKPVTMRPAETRMGSGKGNPEFWVAVIKPGRILFEMGGEEITPEIAKEAMRLAQYKLPLKTKFICLDEQEQPAGTKAAASSTVES</sequence>
<name>RL16_SYNS3</name>
<evidence type="ECO:0000255" key="1">
    <source>
        <dbReference type="HAMAP-Rule" id="MF_01342"/>
    </source>
</evidence>
<evidence type="ECO:0000305" key="2"/>
<organism>
    <name type="scientific">Synechococcus sp. (strain CC9311)</name>
    <dbReference type="NCBI Taxonomy" id="64471"/>
    <lineage>
        <taxon>Bacteria</taxon>
        <taxon>Bacillati</taxon>
        <taxon>Cyanobacteriota</taxon>
        <taxon>Cyanophyceae</taxon>
        <taxon>Synechococcales</taxon>
        <taxon>Synechococcaceae</taxon>
        <taxon>Synechococcus</taxon>
    </lineage>
</organism>
<keyword id="KW-1185">Reference proteome</keyword>
<keyword id="KW-0687">Ribonucleoprotein</keyword>
<keyword id="KW-0689">Ribosomal protein</keyword>
<keyword id="KW-0694">RNA-binding</keyword>
<keyword id="KW-0699">rRNA-binding</keyword>
<keyword id="KW-0820">tRNA-binding</keyword>
<comment type="function">
    <text evidence="1">Binds 23S rRNA and is also seen to make contacts with the A and possibly P site tRNAs.</text>
</comment>
<comment type="subunit">
    <text evidence="1">Part of the 50S ribosomal subunit.</text>
</comment>
<comment type="similarity">
    <text evidence="1">Belongs to the universal ribosomal protein uL16 family.</text>
</comment>
<protein>
    <recommendedName>
        <fullName evidence="1">Large ribosomal subunit protein uL16</fullName>
    </recommendedName>
    <alternativeName>
        <fullName evidence="2">50S ribosomal protein L16</fullName>
    </alternativeName>
</protein>
<proteinExistence type="inferred from homology"/>
<dbReference type="EMBL" id="CP000435">
    <property type="protein sequence ID" value="ABI45536.1"/>
    <property type="molecule type" value="Genomic_DNA"/>
</dbReference>
<dbReference type="RefSeq" id="WP_011618393.1">
    <property type="nucleotide sequence ID" value="NC_008319.1"/>
</dbReference>
<dbReference type="SMR" id="Q0ID12"/>
<dbReference type="STRING" id="64471.sync_0430"/>
<dbReference type="KEGG" id="syg:sync_0430"/>
<dbReference type="eggNOG" id="COG0197">
    <property type="taxonomic scope" value="Bacteria"/>
</dbReference>
<dbReference type="HOGENOM" id="CLU_078858_2_1_3"/>
<dbReference type="OrthoDB" id="9802589at2"/>
<dbReference type="Proteomes" id="UP000001961">
    <property type="component" value="Chromosome"/>
</dbReference>
<dbReference type="GO" id="GO:1990904">
    <property type="term" value="C:ribonucleoprotein complex"/>
    <property type="evidence" value="ECO:0007669"/>
    <property type="project" value="UniProtKB-KW"/>
</dbReference>
<dbReference type="GO" id="GO:0005840">
    <property type="term" value="C:ribosome"/>
    <property type="evidence" value="ECO:0007669"/>
    <property type="project" value="UniProtKB-KW"/>
</dbReference>
<dbReference type="GO" id="GO:0019843">
    <property type="term" value="F:rRNA binding"/>
    <property type="evidence" value="ECO:0007669"/>
    <property type="project" value="UniProtKB-UniRule"/>
</dbReference>
<dbReference type="GO" id="GO:0003735">
    <property type="term" value="F:structural constituent of ribosome"/>
    <property type="evidence" value="ECO:0007669"/>
    <property type="project" value="InterPro"/>
</dbReference>
<dbReference type="GO" id="GO:0000049">
    <property type="term" value="F:tRNA binding"/>
    <property type="evidence" value="ECO:0007669"/>
    <property type="project" value="UniProtKB-KW"/>
</dbReference>
<dbReference type="GO" id="GO:0006412">
    <property type="term" value="P:translation"/>
    <property type="evidence" value="ECO:0007669"/>
    <property type="project" value="UniProtKB-UniRule"/>
</dbReference>
<dbReference type="CDD" id="cd01433">
    <property type="entry name" value="Ribosomal_L16_L10e"/>
    <property type="match status" value="1"/>
</dbReference>
<dbReference type="FunFam" id="3.90.1170.10:FF:000001">
    <property type="entry name" value="50S ribosomal protein L16"/>
    <property type="match status" value="1"/>
</dbReference>
<dbReference type="Gene3D" id="3.90.1170.10">
    <property type="entry name" value="Ribosomal protein L10e/L16"/>
    <property type="match status" value="1"/>
</dbReference>
<dbReference type="HAMAP" id="MF_01342">
    <property type="entry name" value="Ribosomal_uL16"/>
    <property type="match status" value="1"/>
</dbReference>
<dbReference type="InterPro" id="IPR047873">
    <property type="entry name" value="Ribosomal_uL16"/>
</dbReference>
<dbReference type="InterPro" id="IPR000114">
    <property type="entry name" value="Ribosomal_uL16_bact-type"/>
</dbReference>
<dbReference type="InterPro" id="IPR020798">
    <property type="entry name" value="Ribosomal_uL16_CS"/>
</dbReference>
<dbReference type="InterPro" id="IPR016180">
    <property type="entry name" value="Ribosomal_uL16_dom"/>
</dbReference>
<dbReference type="InterPro" id="IPR036920">
    <property type="entry name" value="Ribosomal_uL16_sf"/>
</dbReference>
<dbReference type="NCBIfam" id="TIGR01164">
    <property type="entry name" value="rplP_bact"/>
    <property type="match status" value="1"/>
</dbReference>
<dbReference type="PANTHER" id="PTHR12220">
    <property type="entry name" value="50S/60S RIBOSOMAL PROTEIN L16"/>
    <property type="match status" value="1"/>
</dbReference>
<dbReference type="PANTHER" id="PTHR12220:SF13">
    <property type="entry name" value="LARGE RIBOSOMAL SUBUNIT PROTEIN UL16M"/>
    <property type="match status" value="1"/>
</dbReference>
<dbReference type="Pfam" id="PF00252">
    <property type="entry name" value="Ribosomal_L16"/>
    <property type="match status" value="1"/>
</dbReference>
<dbReference type="PRINTS" id="PR00060">
    <property type="entry name" value="RIBOSOMALL16"/>
</dbReference>
<dbReference type="SUPFAM" id="SSF54686">
    <property type="entry name" value="Ribosomal protein L16p/L10e"/>
    <property type="match status" value="1"/>
</dbReference>
<dbReference type="PROSITE" id="PS00586">
    <property type="entry name" value="RIBOSOMAL_L16_1"/>
    <property type="match status" value="1"/>
</dbReference>
<dbReference type="PROSITE" id="PS00701">
    <property type="entry name" value="RIBOSOMAL_L16_2"/>
    <property type="match status" value="1"/>
</dbReference>
<feature type="chain" id="PRO_1000054724" description="Large ribosomal subunit protein uL16">
    <location>
        <begin position="1"/>
        <end position="155"/>
    </location>
</feature>